<organism>
    <name type="scientific">Escherichia coli (strain UTI89 / UPEC)</name>
    <dbReference type="NCBI Taxonomy" id="364106"/>
    <lineage>
        <taxon>Bacteria</taxon>
        <taxon>Pseudomonadati</taxon>
        <taxon>Pseudomonadota</taxon>
        <taxon>Gammaproteobacteria</taxon>
        <taxon>Enterobacterales</taxon>
        <taxon>Enterobacteriaceae</taxon>
        <taxon>Escherichia</taxon>
    </lineage>
</organism>
<evidence type="ECO:0000255" key="1">
    <source>
        <dbReference type="HAMAP-Rule" id="MF_00104"/>
    </source>
</evidence>
<protein>
    <recommendedName>
        <fullName evidence="1">Ribonuclease 3</fullName>
        <ecNumber evidence="1">3.1.26.3</ecNumber>
    </recommendedName>
    <alternativeName>
        <fullName evidence="1">Ribonuclease III</fullName>
        <shortName evidence="1">RNase III</shortName>
    </alternativeName>
</protein>
<sequence>MNPIVINRLQRKLGYTFNHQELLQQALTHRSASSKHNERLEFLGDSILSYVIANALYHRFPRVDEGDMSRMRATLVRGNTLAELAREFELGECLRLGPGELKSGGFRRESILADTVEALIGGVFLDSDIQTVEKLILNWYQTRLDEISPGDKQKDPKTRLQEYLQGRHLPLPTYLVVQVRGEAHDQEFTIHCQVSGLSEPVVGTGSSRRKAEQAAAEQALKKLELE</sequence>
<gene>
    <name evidence="1" type="primary">rnc</name>
    <name type="ordered locus">UTI89_C2888</name>
</gene>
<name>RNC_ECOUT</name>
<proteinExistence type="inferred from homology"/>
<dbReference type="EC" id="3.1.26.3" evidence="1"/>
<dbReference type="EMBL" id="CP000243">
    <property type="protein sequence ID" value="ABE08348.1"/>
    <property type="molecule type" value="Genomic_DNA"/>
</dbReference>
<dbReference type="RefSeq" id="WP_001068343.1">
    <property type="nucleotide sequence ID" value="NZ_CP064825.1"/>
</dbReference>
<dbReference type="SMR" id="Q1R8G6"/>
<dbReference type="GeneID" id="93774524"/>
<dbReference type="KEGG" id="eci:UTI89_C2888"/>
<dbReference type="HOGENOM" id="CLU_000907_1_1_6"/>
<dbReference type="Proteomes" id="UP000001952">
    <property type="component" value="Chromosome"/>
</dbReference>
<dbReference type="GO" id="GO:0005737">
    <property type="term" value="C:cytoplasm"/>
    <property type="evidence" value="ECO:0007669"/>
    <property type="project" value="UniProtKB-SubCell"/>
</dbReference>
<dbReference type="GO" id="GO:0003725">
    <property type="term" value="F:double-stranded RNA binding"/>
    <property type="evidence" value="ECO:0007669"/>
    <property type="project" value="TreeGrafter"/>
</dbReference>
<dbReference type="GO" id="GO:0046872">
    <property type="term" value="F:metal ion binding"/>
    <property type="evidence" value="ECO:0007669"/>
    <property type="project" value="UniProtKB-KW"/>
</dbReference>
<dbReference type="GO" id="GO:0004525">
    <property type="term" value="F:ribonuclease III activity"/>
    <property type="evidence" value="ECO:0007669"/>
    <property type="project" value="UniProtKB-UniRule"/>
</dbReference>
<dbReference type="GO" id="GO:0019843">
    <property type="term" value="F:rRNA binding"/>
    <property type="evidence" value="ECO:0007669"/>
    <property type="project" value="UniProtKB-KW"/>
</dbReference>
<dbReference type="GO" id="GO:0006397">
    <property type="term" value="P:mRNA processing"/>
    <property type="evidence" value="ECO:0007669"/>
    <property type="project" value="UniProtKB-UniRule"/>
</dbReference>
<dbReference type="GO" id="GO:0010468">
    <property type="term" value="P:regulation of gene expression"/>
    <property type="evidence" value="ECO:0007669"/>
    <property type="project" value="TreeGrafter"/>
</dbReference>
<dbReference type="GO" id="GO:0006364">
    <property type="term" value="P:rRNA processing"/>
    <property type="evidence" value="ECO:0007669"/>
    <property type="project" value="UniProtKB-UniRule"/>
</dbReference>
<dbReference type="GO" id="GO:0008033">
    <property type="term" value="P:tRNA processing"/>
    <property type="evidence" value="ECO:0007669"/>
    <property type="project" value="UniProtKB-KW"/>
</dbReference>
<dbReference type="CDD" id="cd10845">
    <property type="entry name" value="DSRM_RNAse_III_family"/>
    <property type="match status" value="1"/>
</dbReference>
<dbReference type="CDD" id="cd00593">
    <property type="entry name" value="RIBOc"/>
    <property type="match status" value="1"/>
</dbReference>
<dbReference type="FunFam" id="1.10.1520.10:FF:000001">
    <property type="entry name" value="Ribonuclease 3"/>
    <property type="match status" value="1"/>
</dbReference>
<dbReference type="FunFam" id="3.30.160.20:FF:000003">
    <property type="entry name" value="Ribonuclease 3"/>
    <property type="match status" value="1"/>
</dbReference>
<dbReference type="Gene3D" id="3.30.160.20">
    <property type="match status" value="1"/>
</dbReference>
<dbReference type="Gene3D" id="1.10.1520.10">
    <property type="entry name" value="Ribonuclease III domain"/>
    <property type="match status" value="1"/>
</dbReference>
<dbReference type="HAMAP" id="MF_00104">
    <property type="entry name" value="RNase_III"/>
    <property type="match status" value="1"/>
</dbReference>
<dbReference type="InterPro" id="IPR014720">
    <property type="entry name" value="dsRBD_dom"/>
</dbReference>
<dbReference type="InterPro" id="IPR011907">
    <property type="entry name" value="RNase_III"/>
</dbReference>
<dbReference type="InterPro" id="IPR000999">
    <property type="entry name" value="RNase_III_dom"/>
</dbReference>
<dbReference type="InterPro" id="IPR036389">
    <property type="entry name" value="RNase_III_sf"/>
</dbReference>
<dbReference type="NCBIfam" id="TIGR02191">
    <property type="entry name" value="RNaseIII"/>
    <property type="match status" value="1"/>
</dbReference>
<dbReference type="PANTHER" id="PTHR11207:SF0">
    <property type="entry name" value="RIBONUCLEASE 3"/>
    <property type="match status" value="1"/>
</dbReference>
<dbReference type="PANTHER" id="PTHR11207">
    <property type="entry name" value="RIBONUCLEASE III"/>
    <property type="match status" value="1"/>
</dbReference>
<dbReference type="Pfam" id="PF00035">
    <property type="entry name" value="dsrm"/>
    <property type="match status" value="1"/>
</dbReference>
<dbReference type="Pfam" id="PF14622">
    <property type="entry name" value="Ribonucleas_3_3"/>
    <property type="match status" value="1"/>
</dbReference>
<dbReference type="SMART" id="SM00358">
    <property type="entry name" value="DSRM"/>
    <property type="match status" value="1"/>
</dbReference>
<dbReference type="SMART" id="SM00535">
    <property type="entry name" value="RIBOc"/>
    <property type="match status" value="1"/>
</dbReference>
<dbReference type="SUPFAM" id="SSF54768">
    <property type="entry name" value="dsRNA-binding domain-like"/>
    <property type="match status" value="1"/>
</dbReference>
<dbReference type="SUPFAM" id="SSF69065">
    <property type="entry name" value="RNase III domain-like"/>
    <property type="match status" value="1"/>
</dbReference>
<dbReference type="PROSITE" id="PS50137">
    <property type="entry name" value="DS_RBD"/>
    <property type="match status" value="1"/>
</dbReference>
<dbReference type="PROSITE" id="PS00517">
    <property type="entry name" value="RNASE_3_1"/>
    <property type="match status" value="1"/>
</dbReference>
<dbReference type="PROSITE" id="PS50142">
    <property type="entry name" value="RNASE_3_2"/>
    <property type="match status" value="1"/>
</dbReference>
<feature type="chain" id="PRO_1000075750" description="Ribonuclease 3">
    <location>
        <begin position="1"/>
        <end position="226"/>
    </location>
</feature>
<feature type="domain" description="RNase III" evidence="1">
    <location>
        <begin position="6"/>
        <end position="128"/>
    </location>
</feature>
<feature type="domain" description="DRBM" evidence="1">
    <location>
        <begin position="155"/>
        <end position="225"/>
    </location>
</feature>
<feature type="active site" evidence="1">
    <location>
        <position position="45"/>
    </location>
</feature>
<feature type="active site" evidence="1">
    <location>
        <position position="117"/>
    </location>
</feature>
<feature type="binding site" evidence="1">
    <location>
        <position position="41"/>
    </location>
    <ligand>
        <name>Mg(2+)</name>
        <dbReference type="ChEBI" id="CHEBI:18420"/>
    </ligand>
</feature>
<feature type="binding site" evidence="1">
    <location>
        <position position="114"/>
    </location>
    <ligand>
        <name>Mg(2+)</name>
        <dbReference type="ChEBI" id="CHEBI:18420"/>
    </ligand>
</feature>
<feature type="binding site" evidence="1">
    <location>
        <position position="117"/>
    </location>
    <ligand>
        <name>Mg(2+)</name>
        <dbReference type="ChEBI" id="CHEBI:18420"/>
    </ligand>
</feature>
<accession>Q1R8G6</accession>
<reference key="1">
    <citation type="journal article" date="2006" name="Proc. Natl. Acad. Sci. U.S.A.">
        <title>Identification of genes subject to positive selection in uropathogenic strains of Escherichia coli: a comparative genomics approach.</title>
        <authorList>
            <person name="Chen S.L."/>
            <person name="Hung C.-S."/>
            <person name="Xu J."/>
            <person name="Reigstad C.S."/>
            <person name="Magrini V."/>
            <person name="Sabo A."/>
            <person name="Blasiar D."/>
            <person name="Bieri T."/>
            <person name="Meyer R.R."/>
            <person name="Ozersky P."/>
            <person name="Armstrong J.R."/>
            <person name="Fulton R.S."/>
            <person name="Latreille J.P."/>
            <person name="Spieth J."/>
            <person name="Hooton T.M."/>
            <person name="Mardis E.R."/>
            <person name="Hultgren S.J."/>
            <person name="Gordon J.I."/>
        </authorList>
    </citation>
    <scope>NUCLEOTIDE SEQUENCE [LARGE SCALE GENOMIC DNA]</scope>
    <source>
        <strain>UTI89 / UPEC</strain>
    </source>
</reference>
<comment type="function">
    <text evidence="1">Digests double-stranded RNA. Involved in the processing of primary rRNA transcript to yield the immediate precursors to the large and small rRNAs (23S and 16S). Processes some mRNAs, and tRNAs when they are encoded in the rRNA operon. Processes pre-crRNA and tracrRNA of type II CRISPR loci if present in the organism.</text>
</comment>
<comment type="catalytic activity">
    <reaction evidence="1">
        <text>Endonucleolytic cleavage to 5'-phosphomonoester.</text>
        <dbReference type="EC" id="3.1.26.3"/>
    </reaction>
</comment>
<comment type="cofactor">
    <cofactor evidence="1">
        <name>Mg(2+)</name>
        <dbReference type="ChEBI" id="CHEBI:18420"/>
    </cofactor>
</comment>
<comment type="subunit">
    <text evidence="1">Homodimer.</text>
</comment>
<comment type="subcellular location">
    <subcellularLocation>
        <location evidence="1">Cytoplasm</location>
    </subcellularLocation>
</comment>
<comment type="similarity">
    <text evidence="1">Belongs to the ribonuclease III family.</text>
</comment>
<keyword id="KW-0963">Cytoplasm</keyword>
<keyword id="KW-0255">Endonuclease</keyword>
<keyword id="KW-0378">Hydrolase</keyword>
<keyword id="KW-0460">Magnesium</keyword>
<keyword id="KW-0479">Metal-binding</keyword>
<keyword id="KW-0507">mRNA processing</keyword>
<keyword id="KW-0540">Nuclease</keyword>
<keyword id="KW-0694">RNA-binding</keyword>
<keyword id="KW-0698">rRNA processing</keyword>
<keyword id="KW-0699">rRNA-binding</keyword>
<keyword id="KW-0819">tRNA processing</keyword>